<sequence length="483" mass="54302">MTVQTFIPNGAKAASENTVTQPTHTTDVSIKKLYIETQGCQMNEYDSHRMADLLGDSHGYVLTNNPNEADILLMNTCSIREKAQEKVFSELGRWRKLKEQNPDLVIGVGGCVASQEGDNIQKRAPYVDMIFGPQTLHRLPQMLDQHHAQVEKPKKEKIKLVDISFPDIEKFDFLPEPRVEGFKAFVSIMEGCSKYCSFCVVPYTRGEEVSRPLDDVLAEIAGLAEKGVREISLLGQNVNGYRGETFEGGICTFPELLRLVAEIPGIGRLRYTTSHPLEFSDELIQCYEDLPQMVSHLHLPVQSGSNDVLKAMKRNHTIDVYIDKIAKLRKIRPDMHLSSDFIIGFPGETDENFAETLQFIKDLDFDHSYSFVYSKRPGTPASDLPDTTPEHVKKERLAQVQQVIKQSSIEKTDAMLGKIERVLIEKVSDQDPNILVGTADNTRLVTFVGDASWVGRFAEIEITEIKTLNLVYGELLNLEPDVA</sequence>
<organism>
    <name type="scientific">Acinetobacter baumannii (strain AYE)</name>
    <dbReference type="NCBI Taxonomy" id="509173"/>
    <lineage>
        <taxon>Bacteria</taxon>
        <taxon>Pseudomonadati</taxon>
        <taxon>Pseudomonadota</taxon>
        <taxon>Gammaproteobacteria</taxon>
        <taxon>Moraxellales</taxon>
        <taxon>Moraxellaceae</taxon>
        <taxon>Acinetobacter</taxon>
        <taxon>Acinetobacter calcoaceticus/baumannii complex</taxon>
    </lineage>
</organism>
<reference key="1">
    <citation type="journal article" date="2008" name="PLoS ONE">
        <title>Comparative analysis of Acinetobacters: three genomes for three lifestyles.</title>
        <authorList>
            <person name="Vallenet D."/>
            <person name="Nordmann P."/>
            <person name="Barbe V."/>
            <person name="Poirel L."/>
            <person name="Mangenot S."/>
            <person name="Bataille E."/>
            <person name="Dossat C."/>
            <person name="Gas S."/>
            <person name="Kreimeyer A."/>
            <person name="Lenoble P."/>
            <person name="Oztas S."/>
            <person name="Poulain J."/>
            <person name="Segurens B."/>
            <person name="Robert C."/>
            <person name="Abergel C."/>
            <person name="Claverie J.-M."/>
            <person name="Raoult D."/>
            <person name="Medigue C."/>
            <person name="Weissenbach J."/>
            <person name="Cruveiller S."/>
        </authorList>
    </citation>
    <scope>NUCLEOTIDE SEQUENCE [LARGE SCALE GENOMIC DNA]</scope>
    <source>
        <strain>AYE</strain>
    </source>
</reference>
<keyword id="KW-0004">4Fe-4S</keyword>
<keyword id="KW-0963">Cytoplasm</keyword>
<keyword id="KW-0408">Iron</keyword>
<keyword id="KW-0411">Iron-sulfur</keyword>
<keyword id="KW-0479">Metal-binding</keyword>
<keyword id="KW-0949">S-adenosyl-L-methionine</keyword>
<keyword id="KW-0808">Transferase</keyword>
<keyword id="KW-0819">tRNA processing</keyword>
<proteinExistence type="inferred from homology"/>
<name>MIAB_ACIBY</name>
<dbReference type="EC" id="2.8.4.3" evidence="1"/>
<dbReference type="EMBL" id="CU459141">
    <property type="protein sequence ID" value="CAM85435.1"/>
    <property type="molecule type" value="Genomic_DNA"/>
</dbReference>
<dbReference type="RefSeq" id="WP_000218141.1">
    <property type="nucleotide sequence ID" value="NZ_JBDGFB010000011.1"/>
</dbReference>
<dbReference type="SMR" id="B0V6R4"/>
<dbReference type="EnsemblBacteria" id="CAM85435">
    <property type="protein sequence ID" value="CAM85435"/>
    <property type="gene ID" value="ABAYE0462"/>
</dbReference>
<dbReference type="KEGG" id="aby:ABAYE0462"/>
<dbReference type="HOGENOM" id="CLU_018697_2_0_6"/>
<dbReference type="GO" id="GO:0005829">
    <property type="term" value="C:cytosol"/>
    <property type="evidence" value="ECO:0007669"/>
    <property type="project" value="TreeGrafter"/>
</dbReference>
<dbReference type="GO" id="GO:0051539">
    <property type="term" value="F:4 iron, 4 sulfur cluster binding"/>
    <property type="evidence" value="ECO:0007669"/>
    <property type="project" value="UniProtKB-UniRule"/>
</dbReference>
<dbReference type="GO" id="GO:0046872">
    <property type="term" value="F:metal ion binding"/>
    <property type="evidence" value="ECO:0007669"/>
    <property type="project" value="UniProtKB-KW"/>
</dbReference>
<dbReference type="GO" id="GO:0035597">
    <property type="term" value="F:N6-isopentenyladenosine methylthiotransferase activity"/>
    <property type="evidence" value="ECO:0007669"/>
    <property type="project" value="TreeGrafter"/>
</dbReference>
<dbReference type="CDD" id="cd01335">
    <property type="entry name" value="Radical_SAM"/>
    <property type="match status" value="1"/>
</dbReference>
<dbReference type="FunFam" id="3.40.50.12160:FF:000001">
    <property type="entry name" value="tRNA-2-methylthio-N(6)-dimethylallyladenosine synthase"/>
    <property type="match status" value="1"/>
</dbReference>
<dbReference type="FunFam" id="3.80.30.20:FF:000001">
    <property type="entry name" value="tRNA-2-methylthio-N(6)-dimethylallyladenosine synthase 2"/>
    <property type="match status" value="1"/>
</dbReference>
<dbReference type="Gene3D" id="3.40.50.12160">
    <property type="entry name" value="Methylthiotransferase, N-terminal domain"/>
    <property type="match status" value="1"/>
</dbReference>
<dbReference type="Gene3D" id="3.80.30.20">
    <property type="entry name" value="tm_1862 like domain"/>
    <property type="match status" value="1"/>
</dbReference>
<dbReference type="HAMAP" id="MF_01864">
    <property type="entry name" value="tRNA_metthiotr_MiaB"/>
    <property type="match status" value="1"/>
</dbReference>
<dbReference type="InterPro" id="IPR006638">
    <property type="entry name" value="Elp3/MiaA/NifB-like_rSAM"/>
</dbReference>
<dbReference type="InterPro" id="IPR005839">
    <property type="entry name" value="Methylthiotransferase"/>
</dbReference>
<dbReference type="InterPro" id="IPR020612">
    <property type="entry name" value="Methylthiotransferase_CS"/>
</dbReference>
<dbReference type="InterPro" id="IPR013848">
    <property type="entry name" value="Methylthiotransferase_N"/>
</dbReference>
<dbReference type="InterPro" id="IPR038135">
    <property type="entry name" value="Methylthiotransferase_N_sf"/>
</dbReference>
<dbReference type="InterPro" id="IPR006463">
    <property type="entry name" value="MiaB_methiolase"/>
</dbReference>
<dbReference type="InterPro" id="IPR007197">
    <property type="entry name" value="rSAM"/>
</dbReference>
<dbReference type="InterPro" id="IPR023404">
    <property type="entry name" value="rSAM_horseshoe"/>
</dbReference>
<dbReference type="InterPro" id="IPR002792">
    <property type="entry name" value="TRAM_dom"/>
</dbReference>
<dbReference type="NCBIfam" id="TIGR01574">
    <property type="entry name" value="miaB-methiolase"/>
    <property type="match status" value="1"/>
</dbReference>
<dbReference type="NCBIfam" id="TIGR00089">
    <property type="entry name" value="MiaB/RimO family radical SAM methylthiotransferase"/>
    <property type="match status" value="1"/>
</dbReference>
<dbReference type="PANTHER" id="PTHR43020">
    <property type="entry name" value="CDK5 REGULATORY SUBUNIT-ASSOCIATED PROTEIN 1"/>
    <property type="match status" value="1"/>
</dbReference>
<dbReference type="PANTHER" id="PTHR43020:SF2">
    <property type="entry name" value="MITOCHONDRIAL TRNA METHYLTHIOTRANSFERASE CDK5RAP1"/>
    <property type="match status" value="1"/>
</dbReference>
<dbReference type="Pfam" id="PF04055">
    <property type="entry name" value="Radical_SAM"/>
    <property type="match status" value="1"/>
</dbReference>
<dbReference type="Pfam" id="PF01938">
    <property type="entry name" value="TRAM"/>
    <property type="match status" value="1"/>
</dbReference>
<dbReference type="Pfam" id="PF00919">
    <property type="entry name" value="UPF0004"/>
    <property type="match status" value="1"/>
</dbReference>
<dbReference type="SFLD" id="SFLDF00273">
    <property type="entry name" value="(dimethylallyl)adenosine_tRNA"/>
    <property type="match status" value="1"/>
</dbReference>
<dbReference type="SFLD" id="SFLDG01082">
    <property type="entry name" value="B12-binding_domain_containing"/>
    <property type="match status" value="1"/>
</dbReference>
<dbReference type="SFLD" id="SFLDG01061">
    <property type="entry name" value="methylthiotransferase"/>
    <property type="match status" value="1"/>
</dbReference>
<dbReference type="SMART" id="SM00729">
    <property type="entry name" value="Elp3"/>
    <property type="match status" value="1"/>
</dbReference>
<dbReference type="SUPFAM" id="SSF102114">
    <property type="entry name" value="Radical SAM enzymes"/>
    <property type="match status" value="1"/>
</dbReference>
<dbReference type="PROSITE" id="PS51449">
    <property type="entry name" value="MTTASE_N"/>
    <property type="match status" value="1"/>
</dbReference>
<dbReference type="PROSITE" id="PS01278">
    <property type="entry name" value="MTTASE_RADICAL"/>
    <property type="match status" value="1"/>
</dbReference>
<dbReference type="PROSITE" id="PS51918">
    <property type="entry name" value="RADICAL_SAM"/>
    <property type="match status" value="1"/>
</dbReference>
<dbReference type="PROSITE" id="PS50926">
    <property type="entry name" value="TRAM"/>
    <property type="match status" value="1"/>
</dbReference>
<feature type="chain" id="PRO_0000374090" description="tRNA-2-methylthio-N(6)-dimethylallyladenosine synthase">
    <location>
        <begin position="1"/>
        <end position="483"/>
    </location>
</feature>
<feature type="domain" description="MTTase N-terminal" evidence="1">
    <location>
        <begin position="31"/>
        <end position="148"/>
    </location>
</feature>
<feature type="domain" description="Radical SAM core" evidence="2">
    <location>
        <begin position="178"/>
        <end position="410"/>
    </location>
</feature>
<feature type="domain" description="TRAM" evidence="1">
    <location>
        <begin position="413"/>
        <end position="477"/>
    </location>
</feature>
<feature type="binding site" evidence="1">
    <location>
        <position position="40"/>
    </location>
    <ligand>
        <name>[4Fe-4S] cluster</name>
        <dbReference type="ChEBI" id="CHEBI:49883"/>
        <label>1</label>
    </ligand>
</feature>
<feature type="binding site" evidence="1">
    <location>
        <position position="77"/>
    </location>
    <ligand>
        <name>[4Fe-4S] cluster</name>
        <dbReference type="ChEBI" id="CHEBI:49883"/>
        <label>1</label>
    </ligand>
</feature>
<feature type="binding site" evidence="1">
    <location>
        <position position="111"/>
    </location>
    <ligand>
        <name>[4Fe-4S] cluster</name>
        <dbReference type="ChEBI" id="CHEBI:49883"/>
        <label>1</label>
    </ligand>
</feature>
<feature type="binding site" evidence="1">
    <location>
        <position position="192"/>
    </location>
    <ligand>
        <name>[4Fe-4S] cluster</name>
        <dbReference type="ChEBI" id="CHEBI:49883"/>
        <label>2</label>
        <note>4Fe-4S-S-AdoMet</note>
    </ligand>
</feature>
<feature type="binding site" evidence="1">
    <location>
        <position position="196"/>
    </location>
    <ligand>
        <name>[4Fe-4S] cluster</name>
        <dbReference type="ChEBI" id="CHEBI:49883"/>
        <label>2</label>
        <note>4Fe-4S-S-AdoMet</note>
    </ligand>
</feature>
<feature type="binding site" evidence="1">
    <location>
        <position position="199"/>
    </location>
    <ligand>
        <name>[4Fe-4S] cluster</name>
        <dbReference type="ChEBI" id="CHEBI:49883"/>
        <label>2</label>
        <note>4Fe-4S-S-AdoMet</note>
    </ligand>
</feature>
<comment type="function">
    <text evidence="1">Catalyzes the methylthiolation of N6-(dimethylallyl)adenosine (i(6)A), leading to the formation of 2-methylthio-N6-(dimethylallyl)adenosine (ms(2)i(6)A) at position 37 in tRNAs that read codons beginning with uridine.</text>
</comment>
<comment type="catalytic activity">
    <reaction evidence="1">
        <text>N(6)-dimethylallyladenosine(37) in tRNA + (sulfur carrier)-SH + AH2 + 2 S-adenosyl-L-methionine = 2-methylsulfanyl-N(6)-dimethylallyladenosine(37) in tRNA + (sulfur carrier)-H + 5'-deoxyadenosine + L-methionine + A + S-adenosyl-L-homocysteine + 2 H(+)</text>
        <dbReference type="Rhea" id="RHEA:37067"/>
        <dbReference type="Rhea" id="RHEA-COMP:10375"/>
        <dbReference type="Rhea" id="RHEA-COMP:10376"/>
        <dbReference type="Rhea" id="RHEA-COMP:14737"/>
        <dbReference type="Rhea" id="RHEA-COMP:14739"/>
        <dbReference type="ChEBI" id="CHEBI:13193"/>
        <dbReference type="ChEBI" id="CHEBI:15378"/>
        <dbReference type="ChEBI" id="CHEBI:17319"/>
        <dbReference type="ChEBI" id="CHEBI:17499"/>
        <dbReference type="ChEBI" id="CHEBI:29917"/>
        <dbReference type="ChEBI" id="CHEBI:57844"/>
        <dbReference type="ChEBI" id="CHEBI:57856"/>
        <dbReference type="ChEBI" id="CHEBI:59789"/>
        <dbReference type="ChEBI" id="CHEBI:64428"/>
        <dbReference type="ChEBI" id="CHEBI:74415"/>
        <dbReference type="ChEBI" id="CHEBI:74417"/>
        <dbReference type="EC" id="2.8.4.3"/>
    </reaction>
</comment>
<comment type="cofactor">
    <cofactor evidence="1">
        <name>[4Fe-4S] cluster</name>
        <dbReference type="ChEBI" id="CHEBI:49883"/>
    </cofactor>
    <text evidence="1">Binds 2 [4Fe-4S] clusters. One cluster is coordinated with 3 cysteines and an exchangeable S-adenosyl-L-methionine.</text>
</comment>
<comment type="subunit">
    <text evidence="1">Monomer.</text>
</comment>
<comment type="subcellular location">
    <subcellularLocation>
        <location evidence="1">Cytoplasm</location>
    </subcellularLocation>
</comment>
<comment type="similarity">
    <text evidence="1">Belongs to the methylthiotransferase family. MiaB subfamily.</text>
</comment>
<protein>
    <recommendedName>
        <fullName evidence="1">tRNA-2-methylthio-N(6)-dimethylallyladenosine synthase</fullName>
        <ecNumber evidence="1">2.8.4.3</ecNumber>
    </recommendedName>
    <alternativeName>
        <fullName evidence="1">(Dimethylallyl)adenosine tRNA methylthiotransferase MiaB</fullName>
    </alternativeName>
    <alternativeName>
        <fullName evidence="1">tRNA-i(6)A37 methylthiotransferase</fullName>
    </alternativeName>
</protein>
<evidence type="ECO:0000255" key="1">
    <source>
        <dbReference type="HAMAP-Rule" id="MF_01864"/>
    </source>
</evidence>
<evidence type="ECO:0000255" key="2">
    <source>
        <dbReference type="PROSITE-ProRule" id="PRU01266"/>
    </source>
</evidence>
<gene>
    <name evidence="1" type="primary">miaB</name>
    <name type="ordered locus">ABAYE0462</name>
</gene>
<accession>B0V6R4</accession>